<accession>A9WL07</accession>
<sequence>MPVVTMRQLLNSGVHFGHQTRRWNPKMKRFILTERNGIYIIDLQQSLSYIDRAYEFVKATVAHGGTVLFVGTKKQAQEAIAEQSTRVGQPYVNHRWLGGMLTNFQTVAKRIQRMKELEEINFEDVASSGHTKKELLLLKRELTKLEGNLGGIRNLNKVPSTIWIVDTKKEHLAIDEAKKLNIPVVAILDTNCDPDEVDFPIPGNDDAIRSVNLLTRVIADAVAEGLIARNAKATGSAEGTAAEPLAEWERELLESSNTEAPVAETAAAEAPVADAAIEAPVAEEAKTTEADDTK</sequence>
<gene>
    <name evidence="1" type="primary">rpsB</name>
    <name type="ordered locus">RSal33209_0527</name>
</gene>
<reference key="1">
    <citation type="journal article" date="2008" name="J. Bacteriol.">
        <title>Genome sequence of the fish pathogen Renibacterium salmoninarum suggests reductive evolution away from an environmental Arthrobacter ancestor.</title>
        <authorList>
            <person name="Wiens G.D."/>
            <person name="Rockey D.D."/>
            <person name="Wu Z."/>
            <person name="Chang J."/>
            <person name="Levy R."/>
            <person name="Crane S."/>
            <person name="Chen D.S."/>
            <person name="Capri G.R."/>
            <person name="Burnett J.R."/>
            <person name="Sudheesh P.S."/>
            <person name="Schipma M.J."/>
            <person name="Burd H."/>
            <person name="Bhattacharyya A."/>
            <person name="Rhodes L.D."/>
            <person name="Kaul R."/>
            <person name="Strom M.S."/>
        </authorList>
    </citation>
    <scope>NUCLEOTIDE SEQUENCE [LARGE SCALE GENOMIC DNA]</scope>
    <source>
        <strain>ATCC 33209 / DSM 20767 / JCM 11484 / NBRC 15589 / NCIMB 2235</strain>
    </source>
</reference>
<protein>
    <recommendedName>
        <fullName evidence="1">Small ribosomal subunit protein uS2</fullName>
    </recommendedName>
    <alternativeName>
        <fullName evidence="3">30S ribosomal protein S2</fullName>
    </alternativeName>
</protein>
<feature type="chain" id="PRO_1000078894" description="Small ribosomal subunit protein uS2">
    <location>
        <begin position="1"/>
        <end position="294"/>
    </location>
</feature>
<feature type="region of interest" description="Disordered" evidence="2">
    <location>
        <begin position="254"/>
        <end position="294"/>
    </location>
</feature>
<feature type="compositionally biased region" description="Low complexity" evidence="2">
    <location>
        <begin position="259"/>
        <end position="282"/>
    </location>
</feature>
<feature type="compositionally biased region" description="Basic and acidic residues" evidence="2">
    <location>
        <begin position="283"/>
        <end position="294"/>
    </location>
</feature>
<proteinExistence type="inferred from homology"/>
<organism>
    <name type="scientific">Renibacterium salmoninarum (strain ATCC 33209 / DSM 20767 / JCM 11484 / NBRC 15589 / NCIMB 2235)</name>
    <dbReference type="NCBI Taxonomy" id="288705"/>
    <lineage>
        <taxon>Bacteria</taxon>
        <taxon>Bacillati</taxon>
        <taxon>Actinomycetota</taxon>
        <taxon>Actinomycetes</taxon>
        <taxon>Micrococcales</taxon>
        <taxon>Micrococcaceae</taxon>
        <taxon>Renibacterium</taxon>
    </lineage>
</organism>
<evidence type="ECO:0000255" key="1">
    <source>
        <dbReference type="HAMAP-Rule" id="MF_00291"/>
    </source>
</evidence>
<evidence type="ECO:0000256" key="2">
    <source>
        <dbReference type="SAM" id="MobiDB-lite"/>
    </source>
</evidence>
<evidence type="ECO:0000305" key="3"/>
<comment type="similarity">
    <text evidence="1">Belongs to the universal ribosomal protein uS2 family.</text>
</comment>
<dbReference type="EMBL" id="CP000910">
    <property type="protein sequence ID" value="ABY22276.1"/>
    <property type="molecule type" value="Genomic_DNA"/>
</dbReference>
<dbReference type="RefSeq" id="WP_012243980.1">
    <property type="nucleotide sequence ID" value="NC_010168.1"/>
</dbReference>
<dbReference type="SMR" id="A9WL07"/>
<dbReference type="STRING" id="288705.RSal33209_0527"/>
<dbReference type="KEGG" id="rsa:RSal33209_0527"/>
<dbReference type="eggNOG" id="COG0052">
    <property type="taxonomic scope" value="Bacteria"/>
</dbReference>
<dbReference type="HOGENOM" id="CLU_040318_2_3_11"/>
<dbReference type="Proteomes" id="UP000002007">
    <property type="component" value="Chromosome"/>
</dbReference>
<dbReference type="GO" id="GO:0022627">
    <property type="term" value="C:cytosolic small ribosomal subunit"/>
    <property type="evidence" value="ECO:0007669"/>
    <property type="project" value="TreeGrafter"/>
</dbReference>
<dbReference type="GO" id="GO:0003735">
    <property type="term" value="F:structural constituent of ribosome"/>
    <property type="evidence" value="ECO:0007669"/>
    <property type="project" value="InterPro"/>
</dbReference>
<dbReference type="GO" id="GO:0006412">
    <property type="term" value="P:translation"/>
    <property type="evidence" value="ECO:0007669"/>
    <property type="project" value="UniProtKB-UniRule"/>
</dbReference>
<dbReference type="CDD" id="cd01425">
    <property type="entry name" value="RPS2"/>
    <property type="match status" value="1"/>
</dbReference>
<dbReference type="FunFam" id="1.10.287.610:FF:000001">
    <property type="entry name" value="30S ribosomal protein S2"/>
    <property type="match status" value="1"/>
</dbReference>
<dbReference type="Gene3D" id="3.40.50.10490">
    <property type="entry name" value="Glucose-6-phosphate isomerase like protein, domain 1"/>
    <property type="match status" value="1"/>
</dbReference>
<dbReference type="Gene3D" id="1.10.287.610">
    <property type="entry name" value="Helix hairpin bin"/>
    <property type="match status" value="1"/>
</dbReference>
<dbReference type="HAMAP" id="MF_00291_B">
    <property type="entry name" value="Ribosomal_uS2_B"/>
    <property type="match status" value="1"/>
</dbReference>
<dbReference type="InterPro" id="IPR001865">
    <property type="entry name" value="Ribosomal_uS2"/>
</dbReference>
<dbReference type="InterPro" id="IPR005706">
    <property type="entry name" value="Ribosomal_uS2_bac/mit/plastid"/>
</dbReference>
<dbReference type="InterPro" id="IPR018130">
    <property type="entry name" value="Ribosomal_uS2_CS"/>
</dbReference>
<dbReference type="InterPro" id="IPR023591">
    <property type="entry name" value="Ribosomal_uS2_flav_dom_sf"/>
</dbReference>
<dbReference type="NCBIfam" id="TIGR01011">
    <property type="entry name" value="rpsB_bact"/>
    <property type="match status" value="1"/>
</dbReference>
<dbReference type="PANTHER" id="PTHR12534">
    <property type="entry name" value="30S RIBOSOMAL PROTEIN S2 PROKARYOTIC AND ORGANELLAR"/>
    <property type="match status" value="1"/>
</dbReference>
<dbReference type="PANTHER" id="PTHR12534:SF0">
    <property type="entry name" value="SMALL RIBOSOMAL SUBUNIT PROTEIN US2M"/>
    <property type="match status" value="1"/>
</dbReference>
<dbReference type="Pfam" id="PF00318">
    <property type="entry name" value="Ribosomal_S2"/>
    <property type="match status" value="1"/>
</dbReference>
<dbReference type="PRINTS" id="PR00395">
    <property type="entry name" value="RIBOSOMALS2"/>
</dbReference>
<dbReference type="SUPFAM" id="SSF52313">
    <property type="entry name" value="Ribosomal protein S2"/>
    <property type="match status" value="1"/>
</dbReference>
<dbReference type="PROSITE" id="PS00962">
    <property type="entry name" value="RIBOSOMAL_S2_1"/>
    <property type="match status" value="1"/>
</dbReference>
<keyword id="KW-1185">Reference proteome</keyword>
<keyword id="KW-0687">Ribonucleoprotein</keyword>
<keyword id="KW-0689">Ribosomal protein</keyword>
<name>RS2_RENSM</name>